<organism>
    <name type="scientific">Arabidopsis thaliana</name>
    <name type="common">Mouse-ear cress</name>
    <dbReference type="NCBI Taxonomy" id="3702"/>
    <lineage>
        <taxon>Eukaryota</taxon>
        <taxon>Viridiplantae</taxon>
        <taxon>Streptophyta</taxon>
        <taxon>Embryophyta</taxon>
        <taxon>Tracheophyta</taxon>
        <taxon>Spermatophyta</taxon>
        <taxon>Magnoliopsida</taxon>
        <taxon>eudicotyledons</taxon>
        <taxon>Gunneridae</taxon>
        <taxon>Pentapetalae</taxon>
        <taxon>rosids</taxon>
        <taxon>malvids</taxon>
        <taxon>Brassicales</taxon>
        <taxon>Brassicaceae</taxon>
        <taxon>Camelineae</taxon>
        <taxon>Arabidopsis</taxon>
    </lineage>
</organism>
<gene>
    <name type="primary">TOC90</name>
    <name type="synonym">PPI4</name>
    <name type="ordered locus">At5g20300</name>
    <name type="ORF">F5O24.190</name>
</gene>
<reference key="1">
    <citation type="journal article" date="2004" name="Plant Mol. Biol.">
        <title>AtToc90, a new GTP-binding component of the Arabidopsis chloroplast protein import machinery.</title>
        <authorList>
            <person name="Hiltbrunner A."/>
            <person name="Gruenig K."/>
            <person name="Alvarez-Huerta M."/>
            <person name="Infanger S."/>
            <person name="Bauer J."/>
            <person name="Kessler F."/>
        </authorList>
    </citation>
    <scope>NUCLEOTIDE SEQUENCE [MRNA]</scope>
    <scope>FUNCTION</scope>
    <scope>SUBCELLULAR LOCATION</scope>
    <scope>INDUCTION BY LIGHT</scope>
    <scope>INTERACTION WITH TOC33 AND TOC75</scope>
    <source>
        <strain>cv. Columbia</strain>
    </source>
</reference>
<reference key="2">
    <citation type="journal article" date="2000" name="Nature">
        <title>Sequence and analysis of chromosome 5 of the plant Arabidopsis thaliana.</title>
        <authorList>
            <person name="Tabata S."/>
            <person name="Kaneko T."/>
            <person name="Nakamura Y."/>
            <person name="Kotani H."/>
            <person name="Kato T."/>
            <person name="Asamizu E."/>
            <person name="Miyajima N."/>
            <person name="Sasamoto S."/>
            <person name="Kimura T."/>
            <person name="Hosouchi T."/>
            <person name="Kawashima K."/>
            <person name="Kohara M."/>
            <person name="Matsumoto M."/>
            <person name="Matsuno A."/>
            <person name="Muraki A."/>
            <person name="Nakayama S."/>
            <person name="Nakazaki N."/>
            <person name="Naruo K."/>
            <person name="Okumura S."/>
            <person name="Shinpo S."/>
            <person name="Takeuchi C."/>
            <person name="Wada T."/>
            <person name="Watanabe A."/>
            <person name="Yamada M."/>
            <person name="Yasuda M."/>
            <person name="Sato S."/>
            <person name="de la Bastide M."/>
            <person name="Huang E."/>
            <person name="Spiegel L."/>
            <person name="Gnoj L."/>
            <person name="O'Shaughnessy A."/>
            <person name="Preston R."/>
            <person name="Habermann K."/>
            <person name="Murray J."/>
            <person name="Johnson D."/>
            <person name="Rohlfing T."/>
            <person name="Nelson J."/>
            <person name="Stoneking T."/>
            <person name="Pepin K."/>
            <person name="Spieth J."/>
            <person name="Sekhon M."/>
            <person name="Armstrong J."/>
            <person name="Becker M."/>
            <person name="Belter E."/>
            <person name="Cordum H."/>
            <person name="Cordes M."/>
            <person name="Courtney L."/>
            <person name="Courtney W."/>
            <person name="Dante M."/>
            <person name="Du H."/>
            <person name="Edwards J."/>
            <person name="Fryman J."/>
            <person name="Haakensen B."/>
            <person name="Lamar E."/>
            <person name="Latreille P."/>
            <person name="Leonard S."/>
            <person name="Meyer R."/>
            <person name="Mulvaney E."/>
            <person name="Ozersky P."/>
            <person name="Riley A."/>
            <person name="Strowmatt C."/>
            <person name="Wagner-McPherson C."/>
            <person name="Wollam A."/>
            <person name="Yoakum M."/>
            <person name="Bell M."/>
            <person name="Dedhia N."/>
            <person name="Parnell L."/>
            <person name="Shah R."/>
            <person name="Rodriguez M."/>
            <person name="Hoon See L."/>
            <person name="Vil D."/>
            <person name="Baker J."/>
            <person name="Kirchoff K."/>
            <person name="Toth K."/>
            <person name="King L."/>
            <person name="Bahret A."/>
            <person name="Miller B."/>
            <person name="Marra M.A."/>
            <person name="Martienssen R."/>
            <person name="McCombie W.R."/>
            <person name="Wilson R.K."/>
            <person name="Murphy G."/>
            <person name="Bancroft I."/>
            <person name="Volckaert G."/>
            <person name="Wambutt R."/>
            <person name="Duesterhoeft A."/>
            <person name="Stiekema W."/>
            <person name="Pohl T."/>
            <person name="Entian K.-D."/>
            <person name="Terryn N."/>
            <person name="Hartley N."/>
            <person name="Bent E."/>
            <person name="Johnson S."/>
            <person name="Langham S.-A."/>
            <person name="McCullagh B."/>
            <person name="Robben J."/>
            <person name="Grymonprez B."/>
            <person name="Zimmermann W."/>
            <person name="Ramsperger U."/>
            <person name="Wedler H."/>
            <person name="Balke K."/>
            <person name="Wedler E."/>
            <person name="Peters S."/>
            <person name="van Staveren M."/>
            <person name="Dirkse W."/>
            <person name="Mooijman P."/>
            <person name="Klein Lankhorst R."/>
            <person name="Weitzenegger T."/>
            <person name="Bothe G."/>
            <person name="Rose M."/>
            <person name="Hauf J."/>
            <person name="Berneiser S."/>
            <person name="Hempel S."/>
            <person name="Feldpausch M."/>
            <person name="Lamberth S."/>
            <person name="Villarroel R."/>
            <person name="Gielen J."/>
            <person name="Ardiles W."/>
            <person name="Bents O."/>
            <person name="Lemcke K."/>
            <person name="Kolesov G."/>
            <person name="Mayer K.F.X."/>
            <person name="Rudd S."/>
            <person name="Schoof H."/>
            <person name="Schueller C."/>
            <person name="Zaccaria P."/>
            <person name="Mewes H.-W."/>
            <person name="Bevan M."/>
            <person name="Fransz P.F."/>
        </authorList>
    </citation>
    <scope>NUCLEOTIDE SEQUENCE [LARGE SCALE GENOMIC DNA]</scope>
    <source>
        <strain>cv. Columbia</strain>
    </source>
</reference>
<reference key="3">
    <citation type="journal article" date="2017" name="Plant J.">
        <title>Araport11: a complete reannotation of the Arabidopsis thaliana reference genome.</title>
        <authorList>
            <person name="Cheng C.Y."/>
            <person name="Krishnakumar V."/>
            <person name="Chan A.P."/>
            <person name="Thibaud-Nissen F."/>
            <person name="Schobel S."/>
            <person name="Town C.D."/>
        </authorList>
    </citation>
    <scope>GENOME REANNOTATION</scope>
    <source>
        <strain>cv. Columbia</strain>
    </source>
</reference>
<reference key="4">
    <citation type="journal article" date="2004" name="Plant Cell">
        <title>Functional specialization amongst the Arabidopsis Toc159 family of chloroplast protein import receptors.</title>
        <authorList>
            <person name="Kubis S."/>
            <person name="Patel R."/>
            <person name="Combe J."/>
            <person name="Bedard J."/>
            <person name="Kovacheva S."/>
            <person name="Lilley K."/>
            <person name="Biehl A."/>
            <person name="Leister D."/>
            <person name="Rios G."/>
            <person name="Koncz C."/>
            <person name="Jarvis P."/>
        </authorList>
    </citation>
    <scope>TISSUE SPECIFICITY</scope>
</reference>
<name>TOC90_ARATH</name>
<comment type="function">
    <text evidence="6">GTPase involved in protein precursor import into chloroplasts. Seems to recognize chloroplast-destined precursor proteins and regulate their presentation to the translocation channel through GTP hydrolysis. Probably specialized in the import of nuclear encoded photosynthetic preproteins from the cytoplasm to the chloroplast.</text>
</comment>
<comment type="cofactor">
    <cofactor evidence="1">
        <name>Mg(2+)</name>
        <dbReference type="ChEBI" id="CHEBI:18420"/>
    </cofactor>
    <text evidence="1">Binds 1 Mg(2+) ion by subunit.</text>
</comment>
<comment type="subunit">
    <text evidence="1 6">Homodimer (By similarity). Part of the TOC core complex that includes 1 protein for the specific recognition of transit peptides surrounded by a ring composed of four proteins forming translocation channels, and four to five GTP-binding proteins providing energy. This core complex can interact with components of the TIC complex to form a larger import complex. Chloroplastic protein precursor such as prSS (precursor of the RuBisCO small subunit) interacts with these complexes. The TOC complex contains a specific subset of polar lipids such as digalactosyldiacylglyceride (DGDG), phosphatidylcholine (PC) and phosphatidylglycerol (PG). Interacts with TOC33 and TOC75.</text>
</comment>
<comment type="subcellular location">
    <subcellularLocation>
        <location evidence="6">Plastid</location>
        <location evidence="6">Chloroplast outer membrane</location>
        <topology evidence="6">Single-pass membrane protein</topology>
    </subcellularLocation>
    <subcellularLocation>
        <location evidence="6">Cytoplasm</location>
    </subcellularLocation>
    <text evidence="7">Cycles between the cytoplasm and chloroplast, probably as a soluble preprotein receptor. The anchoring to the chloroplast outer membrane required the GTPase activity and GDP. May contain beta barrel transmembrane regions (Probable).</text>
</comment>
<comment type="alternative products">
    <event type="alternative splicing"/>
    <isoform>
        <id>Q6S5G3-1</id>
        <name>1</name>
        <sequence type="displayed"/>
    </isoform>
    <text>A number of isoforms are produced. According to EST sequences.</text>
</comment>
<comment type="tissue specificity">
    <text evidence="5">Expressed in seedlings, leaves, flowers, and roots.</text>
</comment>
<comment type="induction">
    <text evidence="6">By light conditions.</text>
</comment>
<comment type="similarity">
    <text evidence="7">Belongs to the TRAFAC class TrmE-Era-EngA-EngB-Septin-like GTPase superfamily. AIG1/Toc34/Toc159-like paraseptin GTPase family. TOC159 subfamily.</text>
</comment>
<evidence type="ECO:0000250" key="1"/>
<evidence type="ECO:0000255" key="2"/>
<evidence type="ECO:0000255" key="3">
    <source>
        <dbReference type="PROSITE-ProRule" id="PRU01057"/>
    </source>
</evidence>
<evidence type="ECO:0000256" key="4">
    <source>
        <dbReference type="SAM" id="MobiDB-lite"/>
    </source>
</evidence>
<evidence type="ECO:0000269" key="5">
    <source>
    </source>
</evidence>
<evidence type="ECO:0000269" key="6">
    <source>
    </source>
</evidence>
<evidence type="ECO:0000305" key="7"/>
<sequence length="793" mass="89329">MKGFKDWVFALSNSMASSRPLLGSDPFFRDPHQEQDNHSQAPAAPQPVTLSEPPCSTSSDLEILPPLSQQQVPLESLYQSSIDLNGKKHNPLAKIGGLQVQFLRLVQRFGQSQNNILVSKVLYRVHLAMLIRAEESELKNVKLRQDRAKALAREQESSGIPELDFSLRILVLGKTGVGKSATINSIFGQPKSETDAFRPGTDRIEEVMGTVSGVKVTFIDTPGFHPLSSSSTRKNRKILLSIKRYVKKRPPDVVLYLDRLDMIDMRYSDFSLLQLITEIFGAAIWLNTILVMTHSAATTEGRNGQSVNYESYVGQRMDVVQHYIHQAVSDTKLENPVLLVENHPSCKKNLAGEYVLPNGVVWKPQFMFLCVCTKVLGDVQSLLRFRDSIGLGQPSSTRTASLPHLLSVFLRRRLSSGADETEKEIDKLLNLDLEEEDEYDQLPTIRILGKSRFEKLSKSQKKEYLDELDYRETLYLKKQLKEECRRRRDEKLVEEENLEDTEQRDQAAVPLPDMAGPDSFDSDFPAHRYRCVSAGDQWLVRPVYDPQGWDRDVGFDGINIETAAKINRNLFASATGQVSRDKQRFTIQSETNAAYTRNFREQTFSVAVDLQSSGEDLVYSFQGGTKLQTFKHNTTDVGVGLTSFGGKYYVGGKLEDTLLVGKRVKLTANAGQMRGSGQTANGGSFEACIRGRDYPVRNEQIGLTMTALSFKRELVLNYGLQTQFRPARGTNIDVNINMNNRKMGKINVKLNSSEHWEIALISALTMFKALVRRSKTEMTEENEEEKIVNFLVS</sequence>
<feature type="chain" id="PRO_0000352656" description="Translocase of chloroplast 90, chloroplastic">
    <location>
        <begin position="1"/>
        <end position="793"/>
    </location>
</feature>
<feature type="transmembrane region" description="Helical" evidence="2">
    <location>
        <begin position="279"/>
        <end position="297"/>
    </location>
</feature>
<feature type="domain" description="AIG1-type G" evidence="3">
    <location>
        <begin position="164"/>
        <end position="394"/>
    </location>
</feature>
<feature type="region of interest" description="Disordered" evidence="4">
    <location>
        <begin position="22"/>
        <end position="59"/>
    </location>
</feature>
<feature type="region of interest" description="G1" evidence="3">
    <location>
        <begin position="173"/>
        <end position="180"/>
    </location>
</feature>
<feature type="region of interest" description="Homodimerization" evidence="1">
    <location>
        <begin position="195"/>
        <end position="198"/>
    </location>
</feature>
<feature type="region of interest" description="G2" evidence="3">
    <location>
        <begin position="199"/>
        <end position="203"/>
    </location>
</feature>
<feature type="region of interest" description="G3" evidence="3">
    <location>
        <begin position="220"/>
        <end position="223"/>
    </location>
</feature>
<feature type="region of interest" description="Homodimerization" evidence="1">
    <location>
        <begin position="259"/>
        <end position="264"/>
    </location>
</feature>
<feature type="region of interest" description="G4" evidence="3">
    <location>
        <begin position="293"/>
        <end position="296"/>
    </location>
</feature>
<feature type="region of interest" description="G5" evidence="3">
    <location>
        <begin position="341"/>
        <end position="343"/>
    </location>
</feature>
<feature type="coiled-coil region" evidence="2">
    <location>
        <begin position="130"/>
        <end position="157"/>
    </location>
</feature>
<feature type="coiled-coil region" evidence="2">
    <location>
        <begin position="410"/>
        <end position="442"/>
    </location>
</feature>
<feature type="coiled-coil region" evidence="2">
    <location>
        <begin position="477"/>
        <end position="503"/>
    </location>
</feature>
<feature type="compositionally biased region" description="Basic and acidic residues" evidence="4">
    <location>
        <begin position="27"/>
        <end position="37"/>
    </location>
</feature>
<feature type="binding site" evidence="1">
    <location>
        <begin position="176"/>
        <end position="181"/>
    </location>
    <ligand>
        <name>GTP</name>
        <dbReference type="ChEBI" id="CHEBI:37565"/>
    </ligand>
</feature>
<feature type="binding site" evidence="1">
    <location>
        <position position="180"/>
    </location>
    <ligand>
        <name>Mg(2+)</name>
        <dbReference type="ChEBI" id="CHEBI:18420"/>
    </ligand>
</feature>
<feature type="binding site" evidence="1">
    <location>
        <begin position="195"/>
        <end position="200"/>
    </location>
    <ligand>
        <name>GTP</name>
        <dbReference type="ChEBI" id="CHEBI:37565"/>
    </ligand>
</feature>
<feature type="binding site" evidence="1">
    <location>
        <position position="294"/>
    </location>
    <ligand>
        <name>GTP</name>
        <dbReference type="ChEBI" id="CHEBI:37565"/>
    </ligand>
</feature>
<feature type="binding site" evidence="1">
    <location>
        <begin position="341"/>
        <end position="342"/>
    </location>
    <ligand>
        <name>GTP</name>
        <dbReference type="ChEBI" id="CHEBI:37565"/>
    </ligand>
</feature>
<accession>Q6S5G3</accession>
<accession>Q2V361</accession>
<protein>
    <recommendedName>
        <fullName>Translocase of chloroplast 90, chloroplastic</fullName>
        <shortName>AtToc90</shortName>
        <ecNumber>3.6.5.-</ecNumber>
    </recommendedName>
    <alternativeName>
        <fullName>90 kDa chloroplast outer envelope protein</fullName>
    </alternativeName>
    <alternativeName>
        <fullName>Plastid protein import 4</fullName>
    </alternativeName>
</protein>
<dbReference type="EC" id="3.6.5.-"/>
<dbReference type="EMBL" id="AY465351">
    <property type="protein sequence ID" value="AAS38569.1"/>
    <property type="molecule type" value="mRNA"/>
</dbReference>
<dbReference type="EMBL" id="AF296825">
    <property type="status" value="NOT_ANNOTATED_CDS"/>
    <property type="molecule type" value="Genomic_DNA"/>
</dbReference>
<dbReference type="EMBL" id="CP002688">
    <property type="protein sequence ID" value="AED92826.1"/>
    <property type="molecule type" value="Genomic_DNA"/>
</dbReference>
<dbReference type="EMBL" id="CP002688">
    <property type="protein sequence ID" value="AED92827.1"/>
    <property type="molecule type" value="Genomic_DNA"/>
</dbReference>
<dbReference type="EMBL" id="CP002688">
    <property type="protein sequence ID" value="ANM68175.1"/>
    <property type="molecule type" value="Genomic_DNA"/>
</dbReference>
<dbReference type="EMBL" id="CP002688">
    <property type="protein sequence ID" value="ANM68176.1"/>
    <property type="molecule type" value="Genomic_DNA"/>
</dbReference>
<dbReference type="RefSeq" id="NP_001031911.1">
    <molecule id="Q6S5G3-1"/>
    <property type="nucleotide sequence ID" value="NM_001036834.1"/>
</dbReference>
<dbReference type="RefSeq" id="NP_001318609.1">
    <molecule id="Q6S5G3-1"/>
    <property type="nucleotide sequence ID" value="NM_001343650.1"/>
</dbReference>
<dbReference type="RefSeq" id="NP_001329949.1">
    <molecule id="Q6S5G3-1"/>
    <property type="nucleotide sequence ID" value="NM_001343651.1"/>
</dbReference>
<dbReference type="RefSeq" id="NP_197530.2">
    <molecule id="Q6S5G3-1"/>
    <property type="nucleotide sequence ID" value="NM_122037.4"/>
</dbReference>
<dbReference type="SMR" id="Q6S5G3"/>
<dbReference type="FunCoup" id="Q6S5G3">
    <property type="interactions" value="2108"/>
</dbReference>
<dbReference type="STRING" id="3702.Q6S5G3"/>
<dbReference type="iPTMnet" id="Q6S5G3"/>
<dbReference type="PaxDb" id="3702-AT5G20300.2"/>
<dbReference type="ProteomicsDB" id="234334">
    <molecule id="Q6S5G3-1"/>
</dbReference>
<dbReference type="EnsemblPlants" id="AT5G20300.1">
    <molecule id="Q6S5G3-1"/>
    <property type="protein sequence ID" value="AT5G20300.1"/>
    <property type="gene ID" value="AT5G20300"/>
</dbReference>
<dbReference type="EnsemblPlants" id="AT5G20300.2">
    <molecule id="Q6S5G3-1"/>
    <property type="protein sequence ID" value="AT5G20300.2"/>
    <property type="gene ID" value="AT5G20300"/>
</dbReference>
<dbReference type="EnsemblPlants" id="AT5G20300.4">
    <molecule id="Q6S5G3-1"/>
    <property type="protein sequence ID" value="AT5G20300.4"/>
    <property type="gene ID" value="AT5G20300"/>
</dbReference>
<dbReference type="EnsemblPlants" id="AT5G20300.5">
    <molecule id="Q6S5G3-1"/>
    <property type="protein sequence ID" value="AT5G20300.5"/>
    <property type="gene ID" value="AT5G20300"/>
</dbReference>
<dbReference type="GeneID" id="832152"/>
<dbReference type="Gramene" id="AT5G20300.1">
    <molecule id="Q6S5G3-1"/>
    <property type="protein sequence ID" value="AT5G20300.1"/>
    <property type="gene ID" value="AT5G20300"/>
</dbReference>
<dbReference type="Gramene" id="AT5G20300.2">
    <molecule id="Q6S5G3-1"/>
    <property type="protein sequence ID" value="AT5G20300.2"/>
    <property type="gene ID" value="AT5G20300"/>
</dbReference>
<dbReference type="Gramene" id="AT5G20300.4">
    <molecule id="Q6S5G3-1"/>
    <property type="protein sequence ID" value="AT5G20300.4"/>
    <property type="gene ID" value="AT5G20300"/>
</dbReference>
<dbReference type="Gramene" id="AT5G20300.5">
    <molecule id="Q6S5G3-1"/>
    <property type="protein sequence ID" value="AT5G20300.5"/>
    <property type="gene ID" value="AT5G20300"/>
</dbReference>
<dbReference type="KEGG" id="ath:AT5G20300"/>
<dbReference type="Araport" id="AT5G20300"/>
<dbReference type="TAIR" id="AT5G20300">
    <property type="gene designation" value="TOC90"/>
</dbReference>
<dbReference type="eggNOG" id="ENOG502QR60">
    <property type="taxonomic scope" value="Eukaryota"/>
</dbReference>
<dbReference type="InParanoid" id="Q6S5G3"/>
<dbReference type="OMA" id="PEVVHMS"/>
<dbReference type="PhylomeDB" id="Q6S5G3"/>
<dbReference type="PRO" id="PR:Q6S5G3"/>
<dbReference type="Proteomes" id="UP000006548">
    <property type="component" value="Chromosome 5"/>
</dbReference>
<dbReference type="ExpressionAtlas" id="Q6S5G3">
    <property type="expression patterns" value="baseline and differential"/>
</dbReference>
<dbReference type="GO" id="GO:0009707">
    <property type="term" value="C:chloroplast outer membrane"/>
    <property type="evidence" value="ECO:0007669"/>
    <property type="project" value="UniProtKB-SubCell"/>
</dbReference>
<dbReference type="GO" id="GO:0005525">
    <property type="term" value="F:GTP binding"/>
    <property type="evidence" value="ECO:0007669"/>
    <property type="project" value="UniProtKB-KW"/>
</dbReference>
<dbReference type="GO" id="GO:0016787">
    <property type="term" value="F:hydrolase activity"/>
    <property type="evidence" value="ECO:0007669"/>
    <property type="project" value="UniProtKB-KW"/>
</dbReference>
<dbReference type="GO" id="GO:0046872">
    <property type="term" value="F:metal ion binding"/>
    <property type="evidence" value="ECO:0007669"/>
    <property type="project" value="UniProtKB-KW"/>
</dbReference>
<dbReference type="GO" id="GO:0045036">
    <property type="term" value="P:protein targeting to chloroplast"/>
    <property type="evidence" value="ECO:0000315"/>
    <property type="project" value="TAIR"/>
</dbReference>
<dbReference type="GO" id="GO:0015031">
    <property type="term" value="P:protein transport"/>
    <property type="evidence" value="ECO:0007669"/>
    <property type="project" value="UniProtKB-KW"/>
</dbReference>
<dbReference type="CDD" id="cd01853">
    <property type="entry name" value="Toc34_like"/>
    <property type="match status" value="1"/>
</dbReference>
<dbReference type="FunFam" id="3.40.50.300:FF:000413">
    <property type="entry name" value="Translocase of chloroplast 120, chloroplastic"/>
    <property type="match status" value="1"/>
</dbReference>
<dbReference type="Gene3D" id="3.40.50.300">
    <property type="entry name" value="P-loop containing nucleotide triphosphate hydrolases"/>
    <property type="match status" value="1"/>
</dbReference>
<dbReference type="InterPro" id="IPR006703">
    <property type="entry name" value="G_AIG1"/>
</dbReference>
<dbReference type="InterPro" id="IPR045058">
    <property type="entry name" value="GIMA/IAN/Toc"/>
</dbReference>
<dbReference type="InterPro" id="IPR027417">
    <property type="entry name" value="P-loop_NTPase"/>
</dbReference>
<dbReference type="InterPro" id="IPR024283">
    <property type="entry name" value="TOC159_MAD"/>
</dbReference>
<dbReference type="PANTHER" id="PTHR10903">
    <property type="entry name" value="GTPASE, IMAP FAMILY MEMBER-RELATED"/>
    <property type="match status" value="1"/>
</dbReference>
<dbReference type="PANTHER" id="PTHR10903:SF68">
    <property type="entry name" value="TRANSLOCASE OF CHLOROPLAST 90, CHLOROPLASTIC"/>
    <property type="match status" value="1"/>
</dbReference>
<dbReference type="Pfam" id="PF04548">
    <property type="entry name" value="AIG1"/>
    <property type="match status" value="1"/>
</dbReference>
<dbReference type="Pfam" id="PF11886">
    <property type="entry name" value="TOC159_MAD"/>
    <property type="match status" value="1"/>
</dbReference>
<dbReference type="SUPFAM" id="SSF52540">
    <property type="entry name" value="P-loop containing nucleoside triphosphate hydrolases"/>
    <property type="match status" value="1"/>
</dbReference>
<dbReference type="PROSITE" id="PS51720">
    <property type="entry name" value="G_AIG1"/>
    <property type="match status" value="1"/>
</dbReference>
<keyword id="KW-0025">Alternative splicing</keyword>
<keyword id="KW-0150">Chloroplast</keyword>
<keyword id="KW-0175">Coiled coil</keyword>
<keyword id="KW-0963">Cytoplasm</keyword>
<keyword id="KW-0342">GTP-binding</keyword>
<keyword id="KW-0378">Hydrolase</keyword>
<keyword id="KW-0460">Magnesium</keyword>
<keyword id="KW-0472">Membrane</keyword>
<keyword id="KW-0479">Metal-binding</keyword>
<keyword id="KW-0547">Nucleotide-binding</keyword>
<keyword id="KW-0934">Plastid</keyword>
<keyword id="KW-1002">Plastid outer membrane</keyword>
<keyword id="KW-0653">Protein transport</keyword>
<keyword id="KW-0675">Receptor</keyword>
<keyword id="KW-1185">Reference proteome</keyword>
<keyword id="KW-0812">Transmembrane</keyword>
<keyword id="KW-1133">Transmembrane helix</keyword>
<keyword id="KW-0813">Transport</keyword>
<proteinExistence type="evidence at protein level"/>